<comment type="function">
    <text evidence="1">Displays ATPase and GTPase activities.</text>
</comment>
<comment type="similarity">
    <text evidence="1">Belongs to the RapZ-like family.</text>
</comment>
<gene>
    <name type="ordered locus">ZMO1325</name>
</gene>
<evidence type="ECO:0000255" key="1">
    <source>
        <dbReference type="HAMAP-Rule" id="MF_00636"/>
    </source>
</evidence>
<feature type="chain" id="PRO_0000107796" description="Nucleotide-binding protein ZMO1325">
    <location>
        <begin position="1"/>
        <end position="323"/>
    </location>
</feature>
<feature type="binding site" evidence="1">
    <location>
        <begin position="25"/>
        <end position="32"/>
    </location>
    <ligand>
        <name>ATP</name>
        <dbReference type="ChEBI" id="CHEBI:30616"/>
    </ligand>
</feature>
<feature type="binding site" evidence="1">
    <location>
        <begin position="78"/>
        <end position="81"/>
    </location>
    <ligand>
        <name>GTP</name>
        <dbReference type="ChEBI" id="CHEBI:37565"/>
    </ligand>
</feature>
<dbReference type="EMBL" id="AE008692">
    <property type="protein sequence ID" value="AAV89949.1"/>
    <property type="molecule type" value="Genomic_DNA"/>
</dbReference>
<dbReference type="SMR" id="Q5NMW1"/>
<dbReference type="STRING" id="264203.ZMO1325"/>
<dbReference type="KEGG" id="zmo:ZMO1325"/>
<dbReference type="eggNOG" id="COG1660">
    <property type="taxonomic scope" value="Bacteria"/>
</dbReference>
<dbReference type="HOGENOM" id="CLU_059558_0_0_5"/>
<dbReference type="Proteomes" id="UP000001173">
    <property type="component" value="Chromosome"/>
</dbReference>
<dbReference type="GO" id="GO:0005524">
    <property type="term" value="F:ATP binding"/>
    <property type="evidence" value="ECO:0007669"/>
    <property type="project" value="UniProtKB-UniRule"/>
</dbReference>
<dbReference type="GO" id="GO:0005525">
    <property type="term" value="F:GTP binding"/>
    <property type="evidence" value="ECO:0007669"/>
    <property type="project" value="UniProtKB-UniRule"/>
</dbReference>
<dbReference type="HAMAP" id="MF_00636">
    <property type="entry name" value="RapZ_like"/>
    <property type="match status" value="1"/>
</dbReference>
<dbReference type="InterPro" id="IPR027417">
    <property type="entry name" value="P-loop_NTPase"/>
</dbReference>
<dbReference type="InterPro" id="IPR005337">
    <property type="entry name" value="RapZ-like"/>
</dbReference>
<dbReference type="InterPro" id="IPR053930">
    <property type="entry name" value="RapZ-like_N"/>
</dbReference>
<dbReference type="InterPro" id="IPR053931">
    <property type="entry name" value="RapZ_C"/>
</dbReference>
<dbReference type="NCBIfam" id="NF003828">
    <property type="entry name" value="PRK05416.1"/>
    <property type="match status" value="1"/>
</dbReference>
<dbReference type="PANTHER" id="PTHR30448">
    <property type="entry name" value="RNASE ADAPTER PROTEIN RAPZ"/>
    <property type="match status" value="1"/>
</dbReference>
<dbReference type="PANTHER" id="PTHR30448:SF0">
    <property type="entry name" value="RNASE ADAPTER PROTEIN RAPZ"/>
    <property type="match status" value="1"/>
</dbReference>
<dbReference type="Pfam" id="PF22740">
    <property type="entry name" value="PapZ_C"/>
    <property type="match status" value="1"/>
</dbReference>
<dbReference type="Pfam" id="PF03668">
    <property type="entry name" value="RapZ-like_N"/>
    <property type="match status" value="1"/>
</dbReference>
<dbReference type="PIRSF" id="PIRSF005052">
    <property type="entry name" value="P-loopkin"/>
    <property type="match status" value="1"/>
</dbReference>
<dbReference type="SUPFAM" id="SSF52540">
    <property type="entry name" value="P-loop containing nucleoside triphosphate hydrolases"/>
    <property type="match status" value="1"/>
</dbReference>
<keyword id="KW-0067">ATP-binding</keyword>
<keyword id="KW-0342">GTP-binding</keyword>
<keyword id="KW-0547">Nucleotide-binding</keyword>
<keyword id="KW-1185">Reference proteome</keyword>
<proteinExistence type="inferred from homology"/>
<organism>
    <name type="scientific">Zymomonas mobilis subsp. mobilis (strain ATCC 31821 / ZM4 / CP4)</name>
    <dbReference type="NCBI Taxonomy" id="264203"/>
    <lineage>
        <taxon>Bacteria</taxon>
        <taxon>Pseudomonadati</taxon>
        <taxon>Pseudomonadota</taxon>
        <taxon>Alphaproteobacteria</taxon>
        <taxon>Sphingomonadales</taxon>
        <taxon>Zymomonadaceae</taxon>
        <taxon>Zymomonas</taxon>
    </lineage>
</organism>
<name>Y1325_ZYMMO</name>
<protein>
    <recommendedName>
        <fullName evidence="1">Nucleotide-binding protein ZMO1325</fullName>
    </recommendedName>
</protein>
<accession>Q5NMW1</accession>
<sequence>MSRNDLSSAPSSSAAPPARILLVTGLSGAGKSTALRTFEDMGWETVDNLPLSLLERLILTPPSSVAAYKGRPLALGIDSRTRGFTVDAFLKGVEQLRQHHSQPIDILFLDCSDSELMRRFDTTRRRHPLALDRPMEDGISEERAFLAPVREIADFLIDTTTTSSHSLQSELRQQFAPENSVAPNVSILSFGFSRGIPRNCDLLFDMRFLQNPYWEEALRPLTGLDPEIADYIEQDPSFLPAVTKIKDLLLFLLPRYIDTGKSYIVIAFACTGGRHRSVYVAEWIAARLRQAHFSLTITHRDLKLPLLESQSNRIRAGKAYQGG</sequence>
<reference key="1">
    <citation type="journal article" date="2005" name="Nat. Biotechnol.">
        <title>The genome sequence of the ethanologenic bacterium Zymomonas mobilis ZM4.</title>
        <authorList>
            <person name="Seo J.-S."/>
            <person name="Chong H."/>
            <person name="Park H.S."/>
            <person name="Yoon K.-O."/>
            <person name="Jung C."/>
            <person name="Kim J.J."/>
            <person name="Hong J.H."/>
            <person name="Kim H."/>
            <person name="Kim J.-H."/>
            <person name="Kil J.-I."/>
            <person name="Park C.J."/>
            <person name="Oh H.-M."/>
            <person name="Lee J.-S."/>
            <person name="Jin S.-J."/>
            <person name="Um H.-W."/>
            <person name="Lee H.-J."/>
            <person name="Oh S.-J."/>
            <person name="Kim J.Y."/>
            <person name="Kang H.L."/>
            <person name="Lee S.Y."/>
            <person name="Lee K.J."/>
            <person name="Kang H.S."/>
        </authorList>
    </citation>
    <scope>NUCLEOTIDE SEQUENCE [LARGE SCALE GENOMIC DNA]</scope>
    <source>
        <strain>ATCC 31821 / ZM4 / CP4</strain>
    </source>
</reference>